<reference key="1">
    <citation type="journal article" date="2005" name="J. Mol. Biol.">
        <title>Characterization and functional analysis of CReMM, a novel chromodomain helicase DNA-binding protein.</title>
        <authorList>
            <person name="Shur I."/>
            <person name="Benayahu D."/>
        </authorList>
    </citation>
    <scope>NUCLEOTIDE SEQUENCE [MRNA] (ISOFORM 1)</scope>
    <scope>FUNCTION</scope>
    <scope>CATALYTIC ACTIVITY</scope>
    <scope>SUBCELLULAR LOCATION</scope>
    <scope>TISSUE SPECIFICITY</scope>
    <scope>PHOSPHORYLATION</scope>
    <scope>VARIANT GLU-2312</scope>
    <source>
        <tissue>Bone marrow stroma</tissue>
    </source>
</reference>
<reference key="2">
    <citation type="journal article" date="2006" name="Biochem. Biophys. Res. Commun.">
        <title>PRIC320, a transcription coactivator, isolated from peroxisome proliferator-binding protein complex.</title>
        <authorList>
            <person name="Surapureddi S."/>
            <person name="Viswakarma N."/>
            <person name="Yu S."/>
            <person name="Guo D."/>
            <person name="Rao M.S."/>
            <person name="Reddy J.K."/>
        </authorList>
    </citation>
    <scope>NUCLEOTIDE SEQUENCE [MRNA] (ISOFORM 2)</scope>
    <scope>FUNCTION</scope>
    <scope>TISSUE SPECIFICITY</scope>
    <scope>VARIANT GLU-2312</scope>
    <scope>INTERACTION WITH PPARA; ESR1 AND NR1I3</scope>
</reference>
<reference key="3">
    <citation type="submission" date="2004-06" db="EMBL/GenBank/DDBJ databases">
        <title>Cloning of the mammalian orthologs of Drosophila melanogaster gene KISMET.</title>
        <authorList>
            <person name="Colin C."/>
            <person name="Dahia P.L.M."/>
            <person name="Stiles C.D."/>
            <person name="Sogayar M.C."/>
        </authorList>
    </citation>
    <scope>NUCLEOTIDE SEQUENCE [MRNA] (ISOFORM 2)</scope>
    <source>
        <tissue>Pharynx carcinoma</tissue>
    </source>
</reference>
<reference key="4">
    <citation type="journal article" date="2004" name="Nature">
        <title>The sequence and analysis of duplication-rich human chromosome 16.</title>
        <authorList>
            <person name="Martin J."/>
            <person name="Han C."/>
            <person name="Gordon L.A."/>
            <person name="Terry A."/>
            <person name="Prabhakar S."/>
            <person name="She X."/>
            <person name="Xie G."/>
            <person name="Hellsten U."/>
            <person name="Chan Y.M."/>
            <person name="Altherr M."/>
            <person name="Couronne O."/>
            <person name="Aerts A."/>
            <person name="Bajorek E."/>
            <person name="Black S."/>
            <person name="Blumer H."/>
            <person name="Branscomb E."/>
            <person name="Brown N.C."/>
            <person name="Bruno W.J."/>
            <person name="Buckingham J.M."/>
            <person name="Callen D.F."/>
            <person name="Campbell C.S."/>
            <person name="Campbell M.L."/>
            <person name="Campbell E.W."/>
            <person name="Caoile C."/>
            <person name="Challacombe J.F."/>
            <person name="Chasteen L.A."/>
            <person name="Chertkov O."/>
            <person name="Chi H.C."/>
            <person name="Christensen M."/>
            <person name="Clark L.M."/>
            <person name="Cohn J.D."/>
            <person name="Denys M."/>
            <person name="Detter J.C."/>
            <person name="Dickson M."/>
            <person name="Dimitrijevic-Bussod M."/>
            <person name="Escobar J."/>
            <person name="Fawcett J.J."/>
            <person name="Flowers D."/>
            <person name="Fotopulos D."/>
            <person name="Glavina T."/>
            <person name="Gomez M."/>
            <person name="Gonzales E."/>
            <person name="Goodstein D."/>
            <person name="Goodwin L.A."/>
            <person name="Grady D.L."/>
            <person name="Grigoriev I."/>
            <person name="Groza M."/>
            <person name="Hammon N."/>
            <person name="Hawkins T."/>
            <person name="Haydu L."/>
            <person name="Hildebrand C.E."/>
            <person name="Huang W."/>
            <person name="Israni S."/>
            <person name="Jett J."/>
            <person name="Jewett P.B."/>
            <person name="Kadner K."/>
            <person name="Kimball H."/>
            <person name="Kobayashi A."/>
            <person name="Krawczyk M.-C."/>
            <person name="Leyba T."/>
            <person name="Longmire J.L."/>
            <person name="Lopez F."/>
            <person name="Lou Y."/>
            <person name="Lowry S."/>
            <person name="Ludeman T."/>
            <person name="Manohar C.F."/>
            <person name="Mark G.A."/>
            <person name="McMurray K.L."/>
            <person name="Meincke L.J."/>
            <person name="Morgan J."/>
            <person name="Moyzis R.K."/>
            <person name="Mundt M.O."/>
            <person name="Munk A.C."/>
            <person name="Nandkeshwar R.D."/>
            <person name="Pitluck S."/>
            <person name="Pollard M."/>
            <person name="Predki P."/>
            <person name="Parson-Quintana B."/>
            <person name="Ramirez L."/>
            <person name="Rash S."/>
            <person name="Retterer J."/>
            <person name="Ricke D.O."/>
            <person name="Robinson D.L."/>
            <person name="Rodriguez A."/>
            <person name="Salamov A."/>
            <person name="Saunders E.H."/>
            <person name="Scott D."/>
            <person name="Shough T."/>
            <person name="Stallings R.L."/>
            <person name="Stalvey M."/>
            <person name="Sutherland R.D."/>
            <person name="Tapia R."/>
            <person name="Tesmer J.G."/>
            <person name="Thayer N."/>
            <person name="Thompson L.S."/>
            <person name="Tice H."/>
            <person name="Torney D.C."/>
            <person name="Tran-Gyamfi M."/>
            <person name="Tsai M."/>
            <person name="Ulanovsky L.E."/>
            <person name="Ustaszewska A."/>
            <person name="Vo N."/>
            <person name="White P.S."/>
            <person name="Williams A.L."/>
            <person name="Wills P.L."/>
            <person name="Wu J.-R."/>
            <person name="Wu K."/>
            <person name="Yang J."/>
            <person name="DeJong P."/>
            <person name="Bruce D."/>
            <person name="Doggett N.A."/>
            <person name="Deaven L."/>
            <person name="Schmutz J."/>
            <person name="Grimwood J."/>
            <person name="Richardson P."/>
            <person name="Rokhsar D.S."/>
            <person name="Eichler E.E."/>
            <person name="Gilna P."/>
            <person name="Lucas S.M."/>
            <person name="Myers R.M."/>
            <person name="Rubin E.M."/>
            <person name="Pennacchio L.A."/>
        </authorList>
    </citation>
    <scope>NUCLEOTIDE SEQUENCE [LARGE SCALE GENOMIC DNA]</scope>
</reference>
<reference key="5">
    <citation type="journal article" date="2004" name="Genome Res.">
        <title>The status, quality, and expansion of the NIH full-length cDNA project: the Mammalian Gene Collection (MGC).</title>
        <authorList>
            <consortium name="The MGC Project Team"/>
        </authorList>
    </citation>
    <scope>NUCLEOTIDE SEQUENCE [LARGE SCALE MRNA] (ISOFORM 1)</scope>
</reference>
<reference key="6">
    <citation type="journal article" date="1997" name="DNA Res.">
        <title>Prediction of the coding sequences of unidentified human genes. VII. The complete sequences of 100 new cDNA clones from brain which can code for large proteins in vitro.</title>
        <authorList>
            <person name="Nagase T."/>
            <person name="Ishikawa K."/>
            <person name="Nakajima D."/>
            <person name="Ohira M."/>
            <person name="Seki N."/>
            <person name="Miyajima N."/>
            <person name="Tanaka A."/>
            <person name="Kotani H."/>
            <person name="Nomura N."/>
            <person name="Ohara O."/>
        </authorList>
    </citation>
    <scope>NUCLEOTIDE SEQUENCE [LARGE SCALE MRNA] OF 124-2897 (ISOFORM 3)</scope>
    <scope>VARIANT GLU-2312</scope>
    <source>
        <tissue>Brain</tissue>
    </source>
</reference>
<reference key="7">
    <citation type="journal article" date="2000" name="Proc. Natl. Acad. Sci. U.S.A.">
        <title>Gene expression profiling in the human hypothalamus-pituitary-adrenal axis and full-length cDNA cloning.</title>
        <authorList>
            <person name="Hu R.-M."/>
            <person name="Han Z.-G."/>
            <person name="Song H.-D."/>
            <person name="Peng Y.-D."/>
            <person name="Huang Q.-H."/>
            <person name="Ren S.-X."/>
            <person name="Gu Y.-J."/>
            <person name="Huang C.-H."/>
            <person name="Li Y.-B."/>
            <person name="Jiang C.-L."/>
            <person name="Fu G."/>
            <person name="Zhang Q.-H."/>
            <person name="Gu B.-W."/>
            <person name="Dai M."/>
            <person name="Mao Y.-F."/>
            <person name="Gao G.-F."/>
            <person name="Rong R."/>
            <person name="Ye M."/>
            <person name="Zhou J."/>
            <person name="Xu S.-H."/>
            <person name="Gu J."/>
            <person name="Shi J.-X."/>
            <person name="Jin W.-R."/>
            <person name="Zhang C.-K."/>
            <person name="Wu T.-M."/>
            <person name="Huang G.-Y."/>
            <person name="Chen Z."/>
            <person name="Chen M.-D."/>
            <person name="Chen J.-L."/>
        </authorList>
    </citation>
    <scope>NUCLEOTIDE SEQUENCE [LARGE SCALE MRNA] OF 485-639</scope>
    <source>
        <tissue>Adrenal gland</tissue>
    </source>
</reference>
<reference key="8">
    <citation type="journal article" date="2004" name="Nat. Genet.">
        <title>Complete sequencing and characterization of 21,243 full-length human cDNAs.</title>
        <authorList>
            <person name="Ota T."/>
            <person name="Suzuki Y."/>
            <person name="Nishikawa T."/>
            <person name="Otsuki T."/>
            <person name="Sugiyama T."/>
            <person name="Irie R."/>
            <person name="Wakamatsu A."/>
            <person name="Hayashi K."/>
            <person name="Sato H."/>
            <person name="Nagai K."/>
            <person name="Kimura K."/>
            <person name="Makita H."/>
            <person name="Sekine M."/>
            <person name="Obayashi M."/>
            <person name="Nishi T."/>
            <person name="Shibahara T."/>
            <person name="Tanaka T."/>
            <person name="Ishii S."/>
            <person name="Yamamoto J."/>
            <person name="Saito K."/>
            <person name="Kawai Y."/>
            <person name="Isono Y."/>
            <person name="Nakamura Y."/>
            <person name="Nagahari K."/>
            <person name="Murakami K."/>
            <person name="Yasuda T."/>
            <person name="Iwayanagi T."/>
            <person name="Wagatsuma M."/>
            <person name="Shiratori A."/>
            <person name="Sudo H."/>
            <person name="Hosoiri T."/>
            <person name="Kaku Y."/>
            <person name="Kodaira H."/>
            <person name="Kondo H."/>
            <person name="Sugawara M."/>
            <person name="Takahashi M."/>
            <person name="Kanda K."/>
            <person name="Yokoi T."/>
            <person name="Furuya T."/>
            <person name="Kikkawa E."/>
            <person name="Omura Y."/>
            <person name="Abe K."/>
            <person name="Kamihara K."/>
            <person name="Katsuta N."/>
            <person name="Sato K."/>
            <person name="Tanikawa M."/>
            <person name="Yamazaki M."/>
            <person name="Ninomiya K."/>
            <person name="Ishibashi T."/>
            <person name="Yamashita H."/>
            <person name="Murakawa K."/>
            <person name="Fujimori K."/>
            <person name="Tanai H."/>
            <person name="Kimata M."/>
            <person name="Watanabe M."/>
            <person name="Hiraoka S."/>
            <person name="Chiba Y."/>
            <person name="Ishida S."/>
            <person name="Ono Y."/>
            <person name="Takiguchi S."/>
            <person name="Watanabe S."/>
            <person name="Yosida M."/>
            <person name="Hotuta T."/>
            <person name="Kusano J."/>
            <person name="Kanehori K."/>
            <person name="Takahashi-Fujii A."/>
            <person name="Hara H."/>
            <person name="Tanase T.-O."/>
            <person name="Nomura Y."/>
            <person name="Togiya S."/>
            <person name="Komai F."/>
            <person name="Hara R."/>
            <person name="Takeuchi K."/>
            <person name="Arita M."/>
            <person name="Imose N."/>
            <person name="Musashino K."/>
            <person name="Yuuki H."/>
            <person name="Oshima A."/>
            <person name="Sasaki N."/>
            <person name="Aotsuka S."/>
            <person name="Yoshikawa Y."/>
            <person name="Matsunawa H."/>
            <person name="Ichihara T."/>
            <person name="Shiohata N."/>
            <person name="Sano S."/>
            <person name="Moriya S."/>
            <person name="Momiyama H."/>
            <person name="Satoh N."/>
            <person name="Takami S."/>
            <person name="Terashima Y."/>
            <person name="Suzuki O."/>
            <person name="Nakagawa S."/>
            <person name="Senoh A."/>
            <person name="Mizoguchi H."/>
            <person name="Goto Y."/>
            <person name="Shimizu F."/>
            <person name="Wakebe H."/>
            <person name="Hishigaki H."/>
            <person name="Watanabe T."/>
            <person name="Sugiyama A."/>
            <person name="Takemoto M."/>
            <person name="Kawakami B."/>
            <person name="Yamazaki M."/>
            <person name="Watanabe K."/>
            <person name="Kumagai A."/>
            <person name="Itakura S."/>
            <person name="Fukuzumi Y."/>
            <person name="Fujimori Y."/>
            <person name="Komiyama M."/>
            <person name="Tashiro H."/>
            <person name="Tanigami A."/>
            <person name="Fujiwara T."/>
            <person name="Ono T."/>
            <person name="Yamada K."/>
            <person name="Fujii Y."/>
            <person name="Ozaki K."/>
            <person name="Hirao M."/>
            <person name="Ohmori Y."/>
            <person name="Kawabata A."/>
            <person name="Hikiji T."/>
            <person name="Kobatake N."/>
            <person name="Inagaki H."/>
            <person name="Ikema Y."/>
            <person name="Okamoto S."/>
            <person name="Okitani R."/>
            <person name="Kawakami T."/>
            <person name="Noguchi S."/>
            <person name="Itoh T."/>
            <person name="Shigeta K."/>
            <person name="Senba T."/>
            <person name="Matsumura K."/>
            <person name="Nakajima Y."/>
            <person name="Mizuno T."/>
            <person name="Morinaga M."/>
            <person name="Sasaki M."/>
            <person name="Togashi T."/>
            <person name="Oyama M."/>
            <person name="Hata H."/>
            <person name="Watanabe M."/>
            <person name="Komatsu T."/>
            <person name="Mizushima-Sugano J."/>
            <person name="Satoh T."/>
            <person name="Shirai Y."/>
            <person name="Takahashi Y."/>
            <person name="Nakagawa K."/>
            <person name="Okumura K."/>
            <person name="Nagase T."/>
            <person name="Nomura N."/>
            <person name="Kikuchi H."/>
            <person name="Masuho Y."/>
            <person name="Yamashita R."/>
            <person name="Nakai K."/>
            <person name="Yada T."/>
            <person name="Nakamura Y."/>
            <person name="Ohara O."/>
            <person name="Isogai T."/>
            <person name="Sugano S."/>
        </authorList>
    </citation>
    <scope>NUCLEOTIDE SEQUENCE [LARGE SCALE MRNA] OF 886-1616</scope>
</reference>
<reference key="9">
    <citation type="journal article" date="2006" name="Cell">
        <title>Global, in vivo, and site-specific phosphorylation dynamics in signaling networks.</title>
        <authorList>
            <person name="Olsen J.V."/>
            <person name="Blagoev B."/>
            <person name="Gnad F."/>
            <person name="Macek B."/>
            <person name="Kumar C."/>
            <person name="Mortensen P."/>
            <person name="Mann M."/>
        </authorList>
    </citation>
    <scope>PHOSPHORYLATION [LARGE SCALE ANALYSIS] AT SER-1468 AND SER-1472</scope>
    <scope>IDENTIFICATION BY MASS SPECTROMETRY [LARGE SCALE ANALYSIS]</scope>
    <source>
        <tissue>Cervix carcinoma</tissue>
    </source>
</reference>
<reference key="10">
    <citation type="journal article" date="2008" name="Proc. Natl. Acad. Sci. U.S.A.">
        <title>A quantitative atlas of mitotic phosphorylation.</title>
        <authorList>
            <person name="Dephoure N."/>
            <person name="Zhou C."/>
            <person name="Villen J."/>
            <person name="Beausoleil S.A."/>
            <person name="Bakalarski C.E."/>
            <person name="Elledge S.J."/>
            <person name="Gygi S.P."/>
        </authorList>
    </citation>
    <scope>PHOSPHORYLATION [LARGE SCALE ANALYSIS] AT SER-550; SER-611 AND SER-2026</scope>
    <scope>IDENTIFICATION BY MASS SPECTROMETRY [LARGE SCALE ANALYSIS]</scope>
    <source>
        <tissue>Cervix carcinoma</tissue>
    </source>
</reference>
<reference key="11">
    <citation type="journal article" date="2009" name="Anal. Chem.">
        <title>Lys-N and trypsin cover complementary parts of the phosphoproteome in a refined SCX-based approach.</title>
        <authorList>
            <person name="Gauci S."/>
            <person name="Helbig A.O."/>
            <person name="Slijper M."/>
            <person name="Krijgsveld J."/>
            <person name="Heck A.J."/>
            <person name="Mohammed S."/>
        </authorList>
    </citation>
    <scope>IDENTIFICATION BY MASS SPECTROMETRY [LARGE SCALE ANALYSIS]</scope>
</reference>
<reference key="12">
    <citation type="journal article" date="2009" name="Sci. Signal.">
        <title>Quantitative phosphoproteomic analysis of T cell receptor signaling reveals system-wide modulation of protein-protein interactions.</title>
        <authorList>
            <person name="Mayya V."/>
            <person name="Lundgren D.H."/>
            <person name="Hwang S.-I."/>
            <person name="Rezaul K."/>
            <person name="Wu L."/>
            <person name="Eng J.K."/>
            <person name="Rodionov V."/>
            <person name="Han D.K."/>
        </authorList>
    </citation>
    <scope>PHOSPHORYLATION [LARGE SCALE ANALYSIS] AT SER-550; SER-2058 AND SER-2059</scope>
    <scope>IDENTIFICATION BY MASS SPECTROMETRY [LARGE SCALE ANALYSIS]</scope>
    <source>
        <tissue>Leukemic T-cell</tissue>
    </source>
</reference>
<reference key="13">
    <citation type="journal article" date="2009" name="Science">
        <title>Lysine acetylation targets protein complexes and co-regulates major cellular functions.</title>
        <authorList>
            <person name="Choudhary C."/>
            <person name="Kumar C."/>
            <person name="Gnad F."/>
            <person name="Nielsen M.L."/>
            <person name="Rehman M."/>
            <person name="Walther T.C."/>
            <person name="Olsen J.V."/>
            <person name="Mann M."/>
        </authorList>
    </citation>
    <scope>ACETYLATION [LARGE SCALE ANALYSIS] AT LYS-499</scope>
    <scope>IDENTIFICATION BY MASS SPECTROMETRY [LARGE SCALE ANALYSIS]</scope>
</reference>
<reference key="14">
    <citation type="journal article" date="2010" name="Sci. Signal.">
        <title>Quantitative phosphoproteomics reveals widespread full phosphorylation site occupancy during mitosis.</title>
        <authorList>
            <person name="Olsen J.V."/>
            <person name="Vermeulen M."/>
            <person name="Santamaria A."/>
            <person name="Kumar C."/>
            <person name="Miller M.L."/>
            <person name="Jensen L.J."/>
            <person name="Gnad F."/>
            <person name="Cox J."/>
            <person name="Jensen T.S."/>
            <person name="Nigg E.A."/>
            <person name="Brunak S."/>
            <person name="Mann M."/>
        </authorList>
    </citation>
    <scope>PHOSPHORYLATION [LARGE SCALE ANALYSIS] AT SER-550; SER-1468 AND SER-1472</scope>
    <scope>IDENTIFICATION BY MASS SPECTROMETRY [LARGE SCALE ANALYSIS]</scope>
    <source>
        <tissue>Cervix carcinoma</tissue>
    </source>
</reference>
<reference key="15">
    <citation type="journal article" date="2013" name="J. Proteome Res.">
        <title>Toward a comprehensive characterization of a human cancer cell phosphoproteome.</title>
        <authorList>
            <person name="Zhou H."/>
            <person name="Di Palma S."/>
            <person name="Preisinger C."/>
            <person name="Peng M."/>
            <person name="Polat A.N."/>
            <person name="Heck A.J."/>
            <person name="Mohammed S."/>
        </authorList>
    </citation>
    <scope>PHOSPHORYLATION [LARGE SCALE ANALYSIS] AT SER-550; SER-1468; SER-1472; SER-2058; SER-2059; SER-2075 AND SER-2079</scope>
    <scope>IDENTIFICATION BY MASS SPECTROMETRY [LARGE SCALE ANALYSIS]</scope>
    <source>
        <tissue>Cervix carcinoma</tissue>
        <tissue>Erythroleukemia</tissue>
    </source>
</reference>
<reference key="16">
    <citation type="journal article" date="2014" name="Nat. Struct. Mol. Biol.">
        <title>Uncovering global SUMOylation signaling networks in a site-specific manner.</title>
        <authorList>
            <person name="Hendriks I.A."/>
            <person name="D'Souza R.C."/>
            <person name="Yang B."/>
            <person name="Verlaan-de Vries M."/>
            <person name="Mann M."/>
            <person name="Vertegaal A.C."/>
        </authorList>
    </citation>
    <scope>SUMOYLATION [LARGE SCALE ANALYSIS] AT LYS-2350</scope>
    <scope>IDENTIFICATION BY MASS SPECTROMETRY [LARGE SCALE ANALYSIS]</scope>
</reference>
<reference key="17">
    <citation type="journal article" date="2015" name="Cell Rep.">
        <title>SUMO-2 orchestrates chromatin modifiers in response to DNA damage.</title>
        <authorList>
            <person name="Hendriks I.A."/>
            <person name="Treffers L.W."/>
            <person name="Verlaan-de Vries M."/>
            <person name="Olsen J.V."/>
            <person name="Vertegaal A.C."/>
        </authorList>
    </citation>
    <scope>SUMOYLATION [LARGE SCALE ANALYSIS] AT LYS-2038</scope>
    <scope>IDENTIFICATION BY MASS SPECTROMETRY [LARGE SCALE ANALYSIS]</scope>
</reference>
<reference key="18">
    <citation type="journal article" date="2017" name="Nat. Struct. Mol. Biol.">
        <title>Site-specific mapping of the human SUMO proteome reveals co-modification with phosphorylation.</title>
        <authorList>
            <person name="Hendriks I.A."/>
            <person name="Lyon D."/>
            <person name="Young C."/>
            <person name="Jensen L.J."/>
            <person name="Vertegaal A.C."/>
            <person name="Nielsen M.L."/>
        </authorList>
    </citation>
    <scope>SUMOYLATION [LARGE SCALE ANALYSIS] AT LYS-197; LYS-596; LYS-1588; LYS-1738; LYS-1903; LYS-2038; LYS-2074; LYS-2350; LYS-2356; LYS-2361 AND LYS-2843</scope>
    <scope>IDENTIFICATION BY MASS SPECTROMETRY [LARGE SCALE ANALYSIS]</scope>
</reference>
<proteinExistence type="evidence at protein level"/>
<name>CHD9_HUMAN</name>
<comment type="function">
    <text evidence="1 6 7">Probable ATP-dependent chromatin-remodeling factor. Acts as a transcriptional coactivator for PPARA and possibly other nuclear receptors. Has DNA-dependent ATPase activity and binds to A/T-rich DNA. Associates with A/T-rich regulatory regions in promoters of genes that participate in the differentiation of progenitors during osteogenesis (By similarity).</text>
</comment>
<comment type="catalytic activity">
    <reaction evidence="6">
        <text>ATP + H2O = ADP + phosphate + H(+)</text>
        <dbReference type="Rhea" id="RHEA:13065"/>
        <dbReference type="ChEBI" id="CHEBI:15377"/>
        <dbReference type="ChEBI" id="CHEBI:15378"/>
        <dbReference type="ChEBI" id="CHEBI:30616"/>
        <dbReference type="ChEBI" id="CHEBI:43474"/>
        <dbReference type="ChEBI" id="CHEBI:456216"/>
    </reaction>
</comment>
<comment type="subunit">
    <text evidence="7">Interacts with PPARA. Probably interacts with ESR1 and NR1I3.</text>
</comment>
<comment type="interaction">
    <interactant intactId="EBI-960730">
        <id>Q3L8U1-3</id>
    </interactant>
    <interactant intactId="EBI-78615">
        <id>Q07869</id>
        <label>PPARA</label>
    </interactant>
    <organismsDiffer>false</organismsDiffer>
    <experiments>2</experiments>
</comment>
<comment type="subcellular location">
    <subcellularLocation>
        <location evidence="6">Cytoplasm</location>
    </subcellularLocation>
    <subcellularLocation>
        <location evidence="6">Nucleus</location>
    </subcellularLocation>
</comment>
<comment type="alternative products">
    <event type="alternative splicing"/>
    <isoform>
        <id>Q3L8U1-1</id>
        <name>1</name>
        <sequence type="displayed"/>
    </isoform>
    <isoform>
        <id>Q3L8U1-2</id>
        <name>2</name>
        <sequence type="described" ref="VSP_018086"/>
    </isoform>
    <isoform>
        <id>Q3L8U1-3</id>
        <name>3</name>
        <sequence type="described" ref="VSP_018085 VSP_018086"/>
    </isoform>
</comment>
<comment type="tissue specificity">
    <text evidence="6 7">Widely expressed at low levels. In bone marrow, expression is restricted to osteoprogenitor cells adjacent to mature osteoblasts.</text>
</comment>
<comment type="PTM">
    <text evidence="6">Phosphorylated on serine and tyrosine residues.</text>
</comment>
<comment type="similarity">
    <text evidence="13">Belongs to the SNF2/RAD54 helicase family.</text>
</comment>
<comment type="sequence caution" evidence="13">
    <conflict type="erroneous translation">
        <sequence resource="EMBL-CDS" id="AAF24170"/>
    </conflict>
    <text>Wrong choice of frame.</text>
</comment>
<comment type="sequence caution" evidence="13">
    <conflict type="erroneous initiation">
        <sequence resource="EMBL-CDS" id="BAB14112"/>
    </conflict>
</comment>
<accession>Q3L8U1</accession>
<accession>B2RTU2</accession>
<accession>B9ZVQ0</accession>
<accession>O15025</accession>
<accession>Q1WF12</accession>
<accession>Q6DTK9</accession>
<accession>Q9H9V7</accession>
<accession>Q9UHM2</accession>
<organism>
    <name type="scientific">Homo sapiens</name>
    <name type="common">Human</name>
    <dbReference type="NCBI Taxonomy" id="9606"/>
    <lineage>
        <taxon>Eukaryota</taxon>
        <taxon>Metazoa</taxon>
        <taxon>Chordata</taxon>
        <taxon>Craniata</taxon>
        <taxon>Vertebrata</taxon>
        <taxon>Euteleostomi</taxon>
        <taxon>Mammalia</taxon>
        <taxon>Eutheria</taxon>
        <taxon>Euarchontoglires</taxon>
        <taxon>Primates</taxon>
        <taxon>Haplorrhini</taxon>
        <taxon>Catarrhini</taxon>
        <taxon>Hominidae</taxon>
        <taxon>Homo</taxon>
    </lineage>
</organism>
<dbReference type="EC" id="3.6.4.-" evidence="6"/>
<dbReference type="EMBL" id="AY243500">
    <property type="protein sequence ID" value="AAQ24287.1"/>
    <property type="molecule type" value="mRNA"/>
</dbReference>
<dbReference type="EMBL" id="DQ333316">
    <property type="protein sequence ID" value="ABD24032.1"/>
    <property type="molecule type" value="mRNA"/>
</dbReference>
<dbReference type="EMBL" id="AY647157">
    <property type="protein sequence ID" value="AAT66509.1"/>
    <property type="molecule type" value="mRNA"/>
</dbReference>
<dbReference type="EMBL" id="AC007906">
    <property type="status" value="NOT_ANNOTATED_CDS"/>
    <property type="molecule type" value="Genomic_DNA"/>
</dbReference>
<dbReference type="EMBL" id="AC079416">
    <property type="status" value="NOT_ANNOTATED_CDS"/>
    <property type="molecule type" value="Genomic_DNA"/>
</dbReference>
<dbReference type="EMBL" id="BC140815">
    <property type="protein sequence ID" value="AAI40816.1"/>
    <property type="molecule type" value="mRNA"/>
</dbReference>
<dbReference type="EMBL" id="AB002306">
    <property type="protein sequence ID" value="BAA20767.3"/>
    <property type="molecule type" value="mRNA"/>
</dbReference>
<dbReference type="EMBL" id="AF150735">
    <property type="protein sequence ID" value="AAF24170.1"/>
    <property type="status" value="ALT_SEQ"/>
    <property type="molecule type" value="mRNA"/>
</dbReference>
<dbReference type="EMBL" id="AK022582">
    <property type="protein sequence ID" value="BAB14112.1"/>
    <property type="status" value="ALT_INIT"/>
    <property type="molecule type" value="mRNA"/>
</dbReference>
<dbReference type="CCDS" id="CCDS45485.1">
    <molecule id="Q3L8U1-2"/>
</dbReference>
<dbReference type="CCDS" id="CCDS76865.1">
    <molecule id="Q3L8U1-1"/>
</dbReference>
<dbReference type="RefSeq" id="NP_001295248.1">
    <molecule id="Q3L8U1-1"/>
    <property type="nucleotide sequence ID" value="NM_001308319.2"/>
</dbReference>
<dbReference type="RefSeq" id="NP_001339056.1">
    <molecule id="Q3L8U1-2"/>
    <property type="nucleotide sequence ID" value="NM_001352127.3"/>
</dbReference>
<dbReference type="RefSeq" id="NP_001369282.1">
    <molecule id="Q3L8U1-1"/>
    <property type="nucleotide sequence ID" value="NM_001382353.1"/>
</dbReference>
<dbReference type="RefSeq" id="NP_079410.4">
    <molecule id="Q3L8U1-2"/>
    <property type="nucleotide sequence ID" value="NM_025134.4"/>
</dbReference>
<dbReference type="RefSeq" id="XP_005256229.1">
    <property type="nucleotide sequence ID" value="XM_005256172.3"/>
</dbReference>
<dbReference type="RefSeq" id="XP_016879210.1">
    <property type="nucleotide sequence ID" value="XM_017023721.1"/>
</dbReference>
<dbReference type="RefSeq" id="XP_016879211.1">
    <property type="nucleotide sequence ID" value="XM_017023722.1"/>
</dbReference>
<dbReference type="RefSeq" id="XP_016879212.1">
    <property type="nucleotide sequence ID" value="XM_017023723.1"/>
</dbReference>
<dbReference type="RefSeq" id="XP_047290649.1">
    <molecule id="Q3L8U1-1"/>
    <property type="nucleotide sequence ID" value="XM_047434693.1"/>
</dbReference>
<dbReference type="RefSeq" id="XP_047290650.1">
    <molecule id="Q3L8U1-3"/>
    <property type="nucleotide sequence ID" value="XM_047434694.1"/>
</dbReference>
<dbReference type="RefSeq" id="XP_047290651.1">
    <molecule id="Q3L8U1-3"/>
    <property type="nucleotide sequence ID" value="XM_047434695.1"/>
</dbReference>
<dbReference type="SMR" id="Q3L8U1"/>
<dbReference type="BioGRID" id="123174">
    <property type="interactions" value="78"/>
</dbReference>
<dbReference type="FunCoup" id="Q3L8U1">
    <property type="interactions" value="4173"/>
</dbReference>
<dbReference type="IntAct" id="Q3L8U1">
    <property type="interactions" value="43"/>
</dbReference>
<dbReference type="MINT" id="Q3L8U1"/>
<dbReference type="STRING" id="9606.ENSP00000396345"/>
<dbReference type="GlyGen" id="Q3L8U1">
    <property type="glycosylation" value="4 sites, 2 N-linked glycans (2 sites), 1 O-linked glycan (1 site)"/>
</dbReference>
<dbReference type="iPTMnet" id="Q3L8U1"/>
<dbReference type="MetOSite" id="Q3L8U1"/>
<dbReference type="PhosphoSitePlus" id="Q3L8U1"/>
<dbReference type="BioMuta" id="CHD9"/>
<dbReference type="DMDM" id="215273951"/>
<dbReference type="jPOST" id="Q3L8U1"/>
<dbReference type="MassIVE" id="Q3L8U1"/>
<dbReference type="PaxDb" id="9606-ENSP00000457466"/>
<dbReference type="PeptideAtlas" id="Q3L8U1"/>
<dbReference type="ProteomicsDB" id="61749">
    <molecule id="Q3L8U1-1"/>
</dbReference>
<dbReference type="ProteomicsDB" id="61750">
    <molecule id="Q3L8U1-2"/>
</dbReference>
<dbReference type="ProteomicsDB" id="61751">
    <molecule id="Q3L8U1-3"/>
</dbReference>
<dbReference type="Pumba" id="Q3L8U1"/>
<dbReference type="Antibodypedia" id="28339">
    <property type="antibodies" value="71 antibodies from 22 providers"/>
</dbReference>
<dbReference type="DNASU" id="80205"/>
<dbReference type="Ensembl" id="ENST00000398510.7">
    <molecule id="Q3L8U1-1"/>
    <property type="protein sequence ID" value="ENSP00000381522.3"/>
    <property type="gene ID" value="ENSG00000177200.18"/>
</dbReference>
<dbReference type="Ensembl" id="ENST00000447540.6">
    <molecule id="Q3L8U1-1"/>
    <property type="protein sequence ID" value="ENSP00000396345.2"/>
    <property type="gene ID" value="ENSG00000177200.18"/>
</dbReference>
<dbReference type="Ensembl" id="ENST00000564845.5">
    <molecule id="Q3L8U1-2"/>
    <property type="protein sequence ID" value="ENSP00000455307.1"/>
    <property type="gene ID" value="ENSG00000177200.18"/>
</dbReference>
<dbReference type="Ensembl" id="ENST00000566029.5">
    <molecule id="Q3L8U1-2"/>
    <property type="protein sequence ID" value="ENSP00000457466.1"/>
    <property type="gene ID" value="ENSG00000177200.18"/>
</dbReference>
<dbReference type="GeneID" id="80205"/>
<dbReference type="KEGG" id="hsa:80205"/>
<dbReference type="MANE-Select" id="ENST00000447540.6">
    <property type="protein sequence ID" value="ENSP00000396345.2"/>
    <property type="RefSeq nucleotide sequence ID" value="NM_001308319.2"/>
    <property type="RefSeq protein sequence ID" value="NP_001295248.1"/>
</dbReference>
<dbReference type="UCSC" id="uc002egy.4">
    <molecule id="Q3L8U1-1"/>
    <property type="organism name" value="human"/>
</dbReference>
<dbReference type="AGR" id="HGNC:25701"/>
<dbReference type="CTD" id="80205"/>
<dbReference type="DisGeNET" id="80205"/>
<dbReference type="GeneCards" id="CHD9"/>
<dbReference type="HGNC" id="HGNC:25701">
    <property type="gene designation" value="CHD9"/>
</dbReference>
<dbReference type="HPA" id="ENSG00000177200">
    <property type="expression patterns" value="Low tissue specificity"/>
</dbReference>
<dbReference type="neXtProt" id="NX_Q3L8U1"/>
<dbReference type="OpenTargets" id="ENSG00000177200"/>
<dbReference type="PharmGKB" id="PA128394727"/>
<dbReference type="VEuPathDB" id="HostDB:ENSG00000177200"/>
<dbReference type="eggNOG" id="KOG0384">
    <property type="taxonomic scope" value="Eukaryota"/>
</dbReference>
<dbReference type="GeneTree" id="ENSGT00940000155706"/>
<dbReference type="HOGENOM" id="CLU_000315_5_1_1"/>
<dbReference type="InParanoid" id="Q3L8U1"/>
<dbReference type="OMA" id="HIIRGAY"/>
<dbReference type="OrthoDB" id="5857104at2759"/>
<dbReference type="PAN-GO" id="Q3L8U1">
    <property type="GO annotations" value="0 GO annotations based on evolutionary models"/>
</dbReference>
<dbReference type="PhylomeDB" id="Q3L8U1"/>
<dbReference type="TreeFam" id="TF313572"/>
<dbReference type="PathwayCommons" id="Q3L8U1"/>
<dbReference type="Reactome" id="R-HSA-1368082">
    <property type="pathway name" value="RORA activates gene expression"/>
</dbReference>
<dbReference type="Reactome" id="R-HSA-1368108">
    <property type="pathway name" value="BMAL1:CLOCK,NPAS2 activates circadian gene expression"/>
</dbReference>
<dbReference type="Reactome" id="R-HSA-1989781">
    <property type="pathway name" value="PPARA activates gene expression"/>
</dbReference>
<dbReference type="Reactome" id="R-HSA-2151201">
    <property type="pathway name" value="Transcriptional activation of mitochondrial biogenesis"/>
</dbReference>
<dbReference type="Reactome" id="R-HSA-2426168">
    <property type="pathway name" value="Activation of gene expression by SREBF (SREBP)"/>
</dbReference>
<dbReference type="Reactome" id="R-HSA-381340">
    <property type="pathway name" value="Transcriptional regulation of white adipocyte differentiation"/>
</dbReference>
<dbReference type="Reactome" id="R-HSA-400206">
    <property type="pathway name" value="Regulation of lipid metabolism by PPARalpha"/>
</dbReference>
<dbReference type="Reactome" id="R-HSA-400253">
    <property type="pathway name" value="Circadian Clock"/>
</dbReference>
<dbReference type="Reactome" id="R-HSA-9707564">
    <property type="pathway name" value="Cytoprotection by HMOX1"/>
</dbReference>
<dbReference type="Reactome" id="R-HSA-9707616">
    <property type="pathway name" value="Heme signaling"/>
</dbReference>
<dbReference type="SignaLink" id="Q3L8U1"/>
<dbReference type="BioGRID-ORCS" id="80205">
    <property type="hits" value="14 hits in 1174 CRISPR screens"/>
</dbReference>
<dbReference type="ChiTaRS" id="CHD9">
    <property type="organism name" value="human"/>
</dbReference>
<dbReference type="GeneWiki" id="CHD9"/>
<dbReference type="GenomeRNAi" id="80205"/>
<dbReference type="Pharos" id="Q3L8U1">
    <property type="development level" value="Tbio"/>
</dbReference>
<dbReference type="PRO" id="PR:Q3L8U1"/>
<dbReference type="Proteomes" id="UP000005640">
    <property type="component" value="Chromosome 16"/>
</dbReference>
<dbReference type="RNAct" id="Q3L8U1">
    <property type="molecule type" value="protein"/>
</dbReference>
<dbReference type="Bgee" id="ENSG00000177200">
    <property type="expression patterns" value="Expressed in calcaneal tendon and 216 other cell types or tissues"/>
</dbReference>
<dbReference type="ExpressionAtlas" id="Q3L8U1">
    <property type="expression patterns" value="baseline and differential"/>
</dbReference>
<dbReference type="GO" id="GO:0005829">
    <property type="term" value="C:cytosol"/>
    <property type="evidence" value="ECO:0000314"/>
    <property type="project" value="HPA"/>
</dbReference>
<dbReference type="GO" id="GO:0005654">
    <property type="term" value="C:nucleoplasm"/>
    <property type="evidence" value="ECO:0000314"/>
    <property type="project" value="HPA"/>
</dbReference>
<dbReference type="GO" id="GO:0005524">
    <property type="term" value="F:ATP binding"/>
    <property type="evidence" value="ECO:0007669"/>
    <property type="project" value="UniProtKB-KW"/>
</dbReference>
<dbReference type="GO" id="GO:0016887">
    <property type="term" value="F:ATP hydrolysis activity"/>
    <property type="evidence" value="ECO:0007669"/>
    <property type="project" value="RHEA"/>
</dbReference>
<dbReference type="GO" id="GO:0003677">
    <property type="term" value="F:DNA binding"/>
    <property type="evidence" value="ECO:0007669"/>
    <property type="project" value="UniProtKB-KW"/>
</dbReference>
<dbReference type="GO" id="GO:0004386">
    <property type="term" value="F:helicase activity"/>
    <property type="evidence" value="ECO:0007669"/>
    <property type="project" value="UniProtKB-KW"/>
</dbReference>
<dbReference type="GO" id="GO:0006325">
    <property type="term" value="P:chromatin organization"/>
    <property type="evidence" value="ECO:0007669"/>
    <property type="project" value="UniProtKB-KW"/>
</dbReference>
<dbReference type="CDD" id="cd18668">
    <property type="entry name" value="CD1_tandem_CHD5-9_like"/>
    <property type="match status" value="1"/>
</dbReference>
<dbReference type="CDD" id="cd18663">
    <property type="entry name" value="CD2_tandem_CHD5-9_like"/>
    <property type="match status" value="1"/>
</dbReference>
<dbReference type="CDD" id="cd18061">
    <property type="entry name" value="DEXHc_CHD9"/>
    <property type="match status" value="1"/>
</dbReference>
<dbReference type="CDD" id="cd18793">
    <property type="entry name" value="SF2_C_SNF"/>
    <property type="match status" value="1"/>
</dbReference>
<dbReference type="FunFam" id="2.40.50.40:FF:000001">
    <property type="entry name" value="chromodomain-helicase-DNA-binding protein 8 isoform X4"/>
    <property type="match status" value="1"/>
</dbReference>
<dbReference type="FunFam" id="2.40.50.40:FF:000005">
    <property type="entry name" value="chromodomain-helicase-DNA-binding protein 8 isoform X4"/>
    <property type="match status" value="1"/>
</dbReference>
<dbReference type="FunFam" id="3.40.50.10810:FF:000003">
    <property type="entry name" value="chromodomain-helicase-DNA-binding protein 8 isoform X4"/>
    <property type="match status" value="1"/>
</dbReference>
<dbReference type="FunFam" id="3.40.5.120:FF:000002">
    <property type="entry name" value="chromodomain-helicase-DNA-binding protein 9 isoform X1"/>
    <property type="match status" value="1"/>
</dbReference>
<dbReference type="FunFam" id="3.40.5.120:FF:000003">
    <property type="entry name" value="chromodomain-helicase-DNA-binding protein 9 isoform X1"/>
    <property type="match status" value="1"/>
</dbReference>
<dbReference type="FunFam" id="3.40.50.300:FF:000015">
    <property type="entry name" value="chromodomain-helicase-DNA-binding protein 9 isoform X1"/>
    <property type="match status" value="1"/>
</dbReference>
<dbReference type="Gene3D" id="2.40.50.40">
    <property type="match status" value="2"/>
</dbReference>
<dbReference type="Gene3D" id="3.40.5.120">
    <property type="match status" value="2"/>
</dbReference>
<dbReference type="Gene3D" id="1.10.10.60">
    <property type="entry name" value="Homeodomain-like"/>
    <property type="match status" value="2"/>
</dbReference>
<dbReference type="Gene3D" id="3.40.50.300">
    <property type="entry name" value="P-loop containing nucleotide triphosphate hydrolases"/>
    <property type="match status" value="1"/>
</dbReference>
<dbReference type="Gene3D" id="3.40.50.10810">
    <property type="entry name" value="Tandem AAA-ATPase domain"/>
    <property type="match status" value="1"/>
</dbReference>
<dbReference type="InterPro" id="IPR006576">
    <property type="entry name" value="BRK_domain"/>
</dbReference>
<dbReference type="InterPro" id="IPR037259">
    <property type="entry name" value="BRK_sf"/>
</dbReference>
<dbReference type="InterPro" id="IPR051493">
    <property type="entry name" value="CHD"/>
</dbReference>
<dbReference type="InterPro" id="IPR016197">
    <property type="entry name" value="Chromo-like_dom_sf"/>
</dbReference>
<dbReference type="InterPro" id="IPR000953">
    <property type="entry name" value="Chromo/chromo_shadow_dom"/>
</dbReference>
<dbReference type="InterPro" id="IPR023780">
    <property type="entry name" value="Chromo_domain"/>
</dbReference>
<dbReference type="InterPro" id="IPR014001">
    <property type="entry name" value="Helicase_ATP-bd"/>
</dbReference>
<dbReference type="InterPro" id="IPR001650">
    <property type="entry name" value="Helicase_C-like"/>
</dbReference>
<dbReference type="InterPro" id="IPR056342">
    <property type="entry name" value="HTH_CHD6-9"/>
</dbReference>
<dbReference type="InterPro" id="IPR027417">
    <property type="entry name" value="P-loop_NTPase"/>
</dbReference>
<dbReference type="InterPro" id="IPR038718">
    <property type="entry name" value="SNF2-like_sf"/>
</dbReference>
<dbReference type="InterPro" id="IPR049730">
    <property type="entry name" value="SNF2/RAD54-like_C"/>
</dbReference>
<dbReference type="InterPro" id="IPR000330">
    <property type="entry name" value="SNF2_N"/>
</dbReference>
<dbReference type="PANTHER" id="PTHR46850">
    <property type="entry name" value="CHROMODOMAIN-HELICASE-DNA-BINDING PROTEIN 9"/>
    <property type="match status" value="1"/>
</dbReference>
<dbReference type="PANTHER" id="PTHR46850:SF1">
    <property type="entry name" value="CHROMODOMAIN-HELICASE-DNA-BINDING PROTEIN 9"/>
    <property type="match status" value="1"/>
</dbReference>
<dbReference type="Pfam" id="PF07533">
    <property type="entry name" value="BRK"/>
    <property type="match status" value="2"/>
</dbReference>
<dbReference type="Pfam" id="PF00385">
    <property type="entry name" value="Chromo"/>
    <property type="match status" value="2"/>
</dbReference>
<dbReference type="Pfam" id="PF00271">
    <property type="entry name" value="Helicase_C"/>
    <property type="match status" value="1"/>
</dbReference>
<dbReference type="Pfam" id="PF23078">
    <property type="entry name" value="HTH_CHD6-9"/>
    <property type="match status" value="1"/>
</dbReference>
<dbReference type="Pfam" id="PF00176">
    <property type="entry name" value="SNF2-rel_dom"/>
    <property type="match status" value="1"/>
</dbReference>
<dbReference type="SMART" id="SM00592">
    <property type="entry name" value="BRK"/>
    <property type="match status" value="2"/>
</dbReference>
<dbReference type="SMART" id="SM00298">
    <property type="entry name" value="CHROMO"/>
    <property type="match status" value="2"/>
</dbReference>
<dbReference type="SMART" id="SM00487">
    <property type="entry name" value="DEXDc"/>
    <property type="match status" value="1"/>
</dbReference>
<dbReference type="SMART" id="SM00490">
    <property type="entry name" value="HELICc"/>
    <property type="match status" value="1"/>
</dbReference>
<dbReference type="SUPFAM" id="SSF160481">
    <property type="entry name" value="BRK domain-like"/>
    <property type="match status" value="2"/>
</dbReference>
<dbReference type="SUPFAM" id="SSF54160">
    <property type="entry name" value="Chromo domain-like"/>
    <property type="match status" value="2"/>
</dbReference>
<dbReference type="SUPFAM" id="SSF52540">
    <property type="entry name" value="P-loop containing nucleoside triphosphate hydrolases"/>
    <property type="match status" value="2"/>
</dbReference>
<dbReference type="PROSITE" id="PS50013">
    <property type="entry name" value="CHROMO_2"/>
    <property type="match status" value="2"/>
</dbReference>
<dbReference type="PROSITE" id="PS51192">
    <property type="entry name" value="HELICASE_ATP_BIND_1"/>
    <property type="match status" value="1"/>
</dbReference>
<dbReference type="PROSITE" id="PS51194">
    <property type="entry name" value="HELICASE_CTER"/>
    <property type="match status" value="1"/>
</dbReference>
<keyword id="KW-0007">Acetylation</keyword>
<keyword id="KW-0025">Alternative splicing</keyword>
<keyword id="KW-0067">ATP-binding</keyword>
<keyword id="KW-0156">Chromatin regulator</keyword>
<keyword id="KW-0963">Cytoplasm</keyword>
<keyword id="KW-0238">DNA-binding</keyword>
<keyword id="KW-0378">Hydrolase</keyword>
<keyword id="KW-1017">Isopeptide bond</keyword>
<keyword id="KW-0547">Nucleotide-binding</keyword>
<keyword id="KW-0539">Nucleus</keyword>
<keyword id="KW-0597">Phosphoprotein</keyword>
<keyword id="KW-1267">Proteomics identification</keyword>
<keyword id="KW-1185">Reference proteome</keyword>
<keyword id="KW-0677">Repeat</keyword>
<keyword id="KW-0804">Transcription</keyword>
<keyword id="KW-0805">Transcription regulation</keyword>
<keyword id="KW-0832">Ubl conjugation</keyword>
<protein>
    <recommendedName>
        <fullName>Chromodomain-helicase-DNA-binding protein 9</fullName>
        <shortName>CHD-9</shortName>
        <ecNumber evidence="6">3.6.4.-</ecNumber>
    </recommendedName>
    <alternativeName>
        <fullName>ATP-dependent helicase CHD9</fullName>
    </alternativeName>
    <alternativeName>
        <fullName evidence="9">Chromatin-related mesenchymal modulator</fullName>
        <shortName evidence="9">CReMM</shortName>
    </alternativeName>
    <alternativeName>
        <fullName>Chromatin-remodeling factor CHROM1</fullName>
    </alternativeName>
    <alternativeName>
        <fullName>Kismet homolog 2</fullName>
    </alternativeName>
    <alternativeName>
        <fullName>PPAR-alpha-interacting complex protein 320 kDa</fullName>
    </alternativeName>
    <alternativeName>
        <fullName>Peroxisomal proliferator-activated receptor A-interacting complex 320 kDa protein</fullName>
    </alternativeName>
</protein>
<feature type="chain" id="PRO_0000233172" description="Chromodomain-helicase-DNA-binding protein 9">
    <location>
        <begin position="1"/>
        <end position="2897"/>
    </location>
</feature>
<feature type="domain" description="Chromo 1" evidence="2">
    <location>
        <begin position="690"/>
        <end position="761"/>
    </location>
</feature>
<feature type="domain" description="Chromo 2" evidence="2">
    <location>
        <begin position="773"/>
        <end position="839"/>
    </location>
</feature>
<feature type="domain" description="Helicase ATP-binding" evidence="3">
    <location>
        <begin position="872"/>
        <end position="1046"/>
    </location>
</feature>
<feature type="domain" description="Helicase C-terminal" evidence="4">
    <location>
        <begin position="1186"/>
        <end position="1337"/>
    </location>
</feature>
<feature type="region of interest" description="Disordered" evidence="5">
    <location>
        <begin position="173"/>
        <end position="265"/>
    </location>
</feature>
<feature type="region of interest" description="Disordered" evidence="5">
    <location>
        <begin position="482"/>
        <end position="525"/>
    </location>
</feature>
<feature type="region of interest" description="Disordered" evidence="5">
    <location>
        <begin position="537"/>
        <end position="671"/>
    </location>
</feature>
<feature type="region of interest" description="Disordered" evidence="5">
    <location>
        <begin position="1461"/>
        <end position="1484"/>
    </location>
</feature>
<feature type="region of interest" description="Disordered" evidence="5">
    <location>
        <begin position="2050"/>
        <end position="2238"/>
    </location>
</feature>
<feature type="region of interest" description="Disordered" evidence="5">
    <location>
        <begin position="2305"/>
        <end position="2337"/>
    </location>
</feature>
<feature type="region of interest" description="Binds A/T-rich DNA">
    <location>
        <begin position="2332"/>
        <end position="2481"/>
    </location>
</feature>
<feature type="region of interest" description="A.T hook-like">
    <location>
        <begin position="2429"/>
        <end position="2436"/>
    </location>
</feature>
<feature type="region of interest" description="Disordered" evidence="5">
    <location>
        <begin position="2729"/>
        <end position="2777"/>
    </location>
</feature>
<feature type="region of interest" description="Disordered" evidence="5">
    <location>
        <begin position="2827"/>
        <end position="2897"/>
    </location>
</feature>
<feature type="short sequence motif" description="LXXLL motif 1">
    <location>
        <begin position="868"/>
        <end position="872"/>
    </location>
</feature>
<feature type="short sequence motif" description="DEAH box">
    <location>
        <begin position="997"/>
        <end position="1000"/>
    </location>
</feature>
<feature type="short sequence motif" description="LXXLL motif 2">
    <location>
        <begin position="1036"/>
        <end position="1040"/>
    </location>
</feature>
<feature type="short sequence motif" description="LXXLL motif 3">
    <location>
        <begin position="2031"/>
        <end position="2035"/>
    </location>
</feature>
<feature type="short sequence motif" description="LXXLL motif 4">
    <location>
        <begin position="2721"/>
        <end position="2725"/>
    </location>
</feature>
<feature type="short sequence motif" description="LXXLL motif 5">
    <location>
        <begin position="2793"/>
        <end position="2797"/>
    </location>
</feature>
<feature type="compositionally biased region" description="Polar residues" evidence="5">
    <location>
        <begin position="173"/>
        <end position="201"/>
    </location>
</feature>
<feature type="compositionally biased region" description="Low complexity" evidence="5">
    <location>
        <begin position="220"/>
        <end position="235"/>
    </location>
</feature>
<feature type="compositionally biased region" description="Polar residues" evidence="5">
    <location>
        <begin position="247"/>
        <end position="260"/>
    </location>
</feature>
<feature type="compositionally biased region" description="Polar residues" evidence="5">
    <location>
        <begin position="484"/>
        <end position="506"/>
    </location>
</feature>
<feature type="compositionally biased region" description="Basic and acidic residues" evidence="5">
    <location>
        <begin position="508"/>
        <end position="525"/>
    </location>
</feature>
<feature type="compositionally biased region" description="Basic and acidic residues" evidence="5">
    <location>
        <begin position="573"/>
        <end position="593"/>
    </location>
</feature>
<feature type="compositionally biased region" description="Basic residues" evidence="5">
    <location>
        <begin position="634"/>
        <end position="644"/>
    </location>
</feature>
<feature type="compositionally biased region" description="Basic and acidic residues" evidence="5">
    <location>
        <begin position="645"/>
        <end position="660"/>
    </location>
</feature>
<feature type="compositionally biased region" description="Acidic residues" evidence="5">
    <location>
        <begin position="1465"/>
        <end position="1474"/>
    </location>
</feature>
<feature type="compositionally biased region" description="Basic and acidic residues" evidence="5">
    <location>
        <begin position="1475"/>
        <end position="1484"/>
    </location>
</feature>
<feature type="compositionally biased region" description="Basic and acidic residues" evidence="5">
    <location>
        <begin position="2094"/>
        <end position="2104"/>
    </location>
</feature>
<feature type="compositionally biased region" description="Low complexity" evidence="5">
    <location>
        <begin position="2141"/>
        <end position="2193"/>
    </location>
</feature>
<feature type="compositionally biased region" description="Basic and acidic residues" evidence="5">
    <location>
        <begin position="2203"/>
        <end position="2216"/>
    </location>
</feature>
<feature type="compositionally biased region" description="Polar residues" evidence="5">
    <location>
        <begin position="2221"/>
        <end position="2238"/>
    </location>
</feature>
<feature type="compositionally biased region" description="Basic and acidic residues" evidence="5">
    <location>
        <begin position="2739"/>
        <end position="2758"/>
    </location>
</feature>
<feature type="compositionally biased region" description="Low complexity" evidence="5">
    <location>
        <begin position="2759"/>
        <end position="2777"/>
    </location>
</feature>
<feature type="compositionally biased region" description="Basic and acidic residues" evidence="5">
    <location>
        <begin position="2840"/>
        <end position="2857"/>
    </location>
</feature>
<feature type="compositionally biased region" description="Low complexity" evidence="5">
    <location>
        <begin position="2877"/>
        <end position="2888"/>
    </location>
</feature>
<feature type="binding site" evidence="3">
    <location>
        <begin position="885"/>
        <end position="892"/>
    </location>
    <ligand>
        <name>ATP</name>
        <dbReference type="ChEBI" id="CHEBI:30616"/>
    </ligand>
</feature>
<feature type="modified residue" description="N6-acetyllysine" evidence="16">
    <location>
        <position position="499"/>
    </location>
</feature>
<feature type="modified residue" description="Phosphoserine" evidence="15 17 18 19">
    <location>
        <position position="550"/>
    </location>
</feature>
<feature type="modified residue" description="Phosphoserine" evidence="15">
    <location>
        <position position="611"/>
    </location>
</feature>
<feature type="modified residue" description="Phosphoserine" evidence="14 18 19">
    <location>
        <position position="1468"/>
    </location>
</feature>
<feature type="modified residue" description="Phosphoserine" evidence="14 18 19">
    <location>
        <position position="1472"/>
    </location>
</feature>
<feature type="modified residue" description="Phosphoserine" evidence="15">
    <location>
        <position position="2026"/>
    </location>
</feature>
<feature type="modified residue" description="Phosphoserine" evidence="17 19">
    <location>
        <position position="2058"/>
    </location>
</feature>
<feature type="modified residue" description="Phosphoserine" evidence="17 19">
    <location>
        <position position="2059"/>
    </location>
</feature>
<feature type="modified residue" description="Phosphoserine" evidence="19">
    <location>
        <position position="2075"/>
    </location>
</feature>
<feature type="modified residue" description="Phosphoserine" evidence="19">
    <location>
        <position position="2079"/>
    </location>
</feature>
<feature type="cross-link" description="Glycyl lysine isopeptide (Lys-Gly) (interchain with G-Cter in SUMO2)" evidence="22">
    <location>
        <position position="197"/>
    </location>
</feature>
<feature type="cross-link" description="Glycyl lysine isopeptide (Lys-Gly) (interchain with G-Cter in SUMO2)" evidence="22">
    <location>
        <position position="596"/>
    </location>
</feature>
<feature type="cross-link" description="Glycyl lysine isopeptide (Lys-Gly) (interchain with G-Cter in SUMO2)" evidence="22">
    <location>
        <position position="1588"/>
    </location>
</feature>
<feature type="cross-link" description="Glycyl lysine isopeptide (Lys-Gly) (interchain with G-Cter in SUMO2)" evidence="22">
    <location>
        <position position="1738"/>
    </location>
</feature>
<feature type="cross-link" description="Glycyl lysine isopeptide (Lys-Gly) (interchain with G-Cter in SUMO2)" evidence="22">
    <location>
        <position position="1903"/>
    </location>
</feature>
<feature type="cross-link" description="Glycyl lysine isopeptide (Lys-Gly) (interchain with G-Cter in SUMO2)" evidence="21 22">
    <location>
        <position position="2038"/>
    </location>
</feature>
<feature type="cross-link" description="Glycyl lysine isopeptide (Lys-Gly) (interchain with G-Cter in SUMO2)" evidence="22">
    <location>
        <position position="2074"/>
    </location>
</feature>
<feature type="cross-link" description="Glycyl lysine isopeptide (Lys-Gly) (interchain with G-Cter in SUMO2)" evidence="20 22">
    <location>
        <position position="2350"/>
    </location>
</feature>
<feature type="cross-link" description="Glycyl lysine isopeptide (Lys-Gly) (interchain with G-Cter in SUMO2)" evidence="22">
    <location>
        <position position="2356"/>
    </location>
</feature>
<feature type="cross-link" description="Glycyl lysine isopeptide (Lys-Gly) (interchain with G-Cter in SUMO2)" evidence="22">
    <location>
        <position position="2361"/>
    </location>
</feature>
<feature type="cross-link" description="Glycyl lysine isopeptide (Lys-Gly) (interchain with G-Cter in SUMO2)" evidence="22">
    <location>
        <position position="2843"/>
    </location>
</feature>
<feature type="splice variant" id="VSP_018085" description="In isoform 3." evidence="11">
    <original>R</original>
    <variation>RA</variation>
    <location>
        <position position="2206"/>
    </location>
</feature>
<feature type="splice variant" id="VSP_018086" description="In isoform 2 and isoform 3." evidence="10 11 12">
    <location>
        <begin position="2336"/>
        <end position="2351"/>
    </location>
</feature>
<feature type="sequence variant" id="VAR_047355" description="In dbSNP:rs6499548." evidence="6 7 8">
    <original>D</original>
    <variation>E</variation>
    <location>
        <position position="2312"/>
    </location>
</feature>
<feature type="sequence conflict" description="In Ref. 3; AAT66509." evidence="13" ref="3">
    <original>SQF</original>
    <variation>PQL</variation>
    <location>
        <begin position="98"/>
        <end position="100"/>
    </location>
</feature>
<feature type="sequence conflict" description="In Ref. 3; AAT66509." evidence="13" ref="3">
    <original>S</original>
    <variation>P</variation>
    <location>
        <position position="119"/>
    </location>
</feature>
<feature type="sequence conflict" description="In Ref. 3; AAT66509." evidence="13" ref="3">
    <original>V</original>
    <variation>A</variation>
    <location>
        <position position="208"/>
    </location>
</feature>
<feature type="sequence conflict" description="In Ref. 3; AAT66509." evidence="13" ref="3">
    <original>L</original>
    <variation>I</variation>
    <location>
        <position position="473"/>
    </location>
</feature>
<feature type="sequence conflict" description="In Ref. 2; ABD24032 and 6; BAA20767." evidence="13" ref="2 6">
    <original>R</original>
    <variation>C</variation>
    <location>
        <position position="836"/>
    </location>
</feature>
<feature type="sequence conflict" description="In Ref. 2; ABD24032 and 8; BAB14112." evidence="13" ref="2 8">
    <original>A</original>
    <variation>V</variation>
    <location>
        <position position="1072"/>
    </location>
</feature>
<feature type="sequence conflict" description="In Ref. 3; AAT66509." evidence="13" ref="3">
    <original>S</original>
    <variation>F</variation>
    <location>
        <position position="1122"/>
    </location>
</feature>
<feature type="sequence conflict" description="In Ref. 3; AAT66509." evidence="13" ref="3">
    <original>S</original>
    <variation>P</variation>
    <location>
        <position position="1372"/>
    </location>
</feature>
<feature type="sequence conflict" description="In Ref. 2; ABD24032 and 8; BAB14112." evidence="13" ref="2 8">
    <original>S</original>
    <variation>G</variation>
    <location>
        <position position="1442"/>
    </location>
</feature>
<feature type="sequence conflict" description="In Ref. 3; AAT66509." evidence="13" ref="3">
    <original>A</original>
    <variation>T</variation>
    <location>
        <position position="1724"/>
    </location>
</feature>
<feature type="sequence conflict" description="In Ref. 3; AAT66509." evidence="13" ref="3">
    <original>S</original>
    <variation>L</variation>
    <location>
        <position position="1754"/>
    </location>
</feature>
<feature type="sequence conflict" description="In Ref. 3; AAT66509." evidence="13" ref="3">
    <original>T</original>
    <variation>A</variation>
    <location>
        <position position="1867"/>
    </location>
</feature>
<feature type="sequence conflict" description="In Ref. 3; AAT66509." evidence="13" ref="3">
    <original>A</original>
    <variation>V</variation>
    <location>
        <position position="2025"/>
    </location>
</feature>
<feature type="sequence conflict" description="In Ref. 3; AAT66509." evidence="13" ref="3">
    <original>T</original>
    <variation>A</variation>
    <location>
        <position position="2069"/>
    </location>
</feature>
<feature type="sequence conflict" description="In Ref. 3; AAT66509." evidence="13" ref="3">
    <original>V</original>
    <variation>G</variation>
    <location>
        <position position="2078"/>
    </location>
</feature>
<feature type="sequence conflict" description="In Ref. 3; AAT66509." evidence="13" ref="3">
    <original>S</original>
    <variation>F</variation>
    <location>
        <position position="2189"/>
    </location>
</feature>
<feature type="sequence conflict" description="In Ref. 3; AAT66509." evidence="13" ref="3">
    <original>S</original>
    <variation>N</variation>
    <location>
        <position position="2759"/>
    </location>
</feature>
<feature type="sequence conflict" description="In Ref. 1; AAQ24287 and 6; BAA20767." evidence="13" ref="1 6">
    <original>T</original>
    <variation>A</variation>
    <location>
        <position position="2776"/>
    </location>
</feature>
<sequence length="2897" mass="326022">MTDPMMDFFDDANLFGETLEGLSDDAFVQPGPVSLVDELNLGAEFEPLHIDSLNHVQGTPTHQKMTDFEQLNQFDSIKFHHVNQSFGSPAEHVLSPHSQFNCSPIHPQNQPNGLFPDVSDGSPMWGHQTATTISNQNGSPFHQQGHSHSMHQNKSFVAHHDFALFQANEQQTQCTSLRSQQNRNNLNPGQNSLSQSKNFMNVSGPHRVNVNHPPQMTNASNSQQSISMQQFSQTSNPSAHFHKCSSHQEGNFNGPSPNMTSCSVSNSQQFSSHYSFSSNHISPNSLLQSSAVLASNHTNQTLSDFTGSNSFSPHRGIKQESTQHILNPNTSLNSNNFQILHSSHPQGNYSNSKLSPVHMNFPDPVDSGTQMGHFNDHVETNGFSSLEENLLHQVESQTEPFTGLDPEDLLQEGLLPHFDESTFGQDNSSHILDHDLDRQFTSHLVTRPSDMAQTQLQSQARSWHSSFSNHQHLHDRNHLCLQRQPPSSKKSDGSGTYTKLQNTQVRVMSEKKQRKKVESESKQEKANRIISEAIAKAKERGERNIPRVMSPENFPTASVEGKEEKKGRRMKSKPKDKDSKKTKTCSKLKEKTKIGKLIITLGKKQKRKNESSDEISDAEQMPQHTLKDQDSQKRRSNRQIKRKKYAEDIEGKQSEEEVKGSMKIKKNSAPLPGEQPLQLFVENPSEEDAAIVDKILSSRTVKKEISPGVMIDTEEFFVKYKNYSYLHCEWATEEQLLKDKRIQQKIKRFKLRQAQRAHFFADMEEEPFNPDYVEVDRVLEVSFCEDKDTGEPVIYYLVKWCSLPYEDSTWELKEDVDLAKIEEFEQLQASRPDTRRLDRPPSNIWKKIDQSRDYKNGNQLREYQLEGLNWLLFNWYNRRNCILADEMGLGKTIQSITFLYEILLTGIRGPFLIIAPLSTIANWEREFRTWTDINVVVYHGSLISRQMIQQYEMYFRDSQGRIIRGAYRFQAIITTFEMILGGCGELNAIEWRCVIIDEAHRLKNKNCKLLEGLKLMNLEHKVLLTGTPLQNTVEELFSLLHFLEPLRFPSESTFMQEFGDLKTEEQVQKLQAILKPMMLRRLKEDVEKKLAPKEETIIEVELTNIQKKYYRAILEKNFSFLSKGAGQTNVPNLVNTMMELRKCCNHPYLIKGAEEKILGEFRDTYNPAASDFHLQAMIQSAGKLVLIDKLLPKMKAGGHKVLIFSQMVRCLDILEDYLIHKRYLYERIDGRVRGNLRQAAIDRFSKPDSDRFVFLLCTRAGGLGINLTAADTCIIFDSDWNPQNDLQAQARCHRIGQNKAVKVYRLVTRNSYEREMFDRASLKLGLDKAVLQSMSGRESNVGGIQQLSKKEIEDLLRRGAYGAIMEEEDEGSKFCEEDIDQILLRRTKTITIESEGRGSTFAKASFVASGNRTDISLDDPNFWQKWAKKAEIDIEAISGRNSLVIDTPRIRKQTRPFSATKDELAELSEAESEGDEKPKLRRPCDRSNGYGRTECFRVEKNLLVYGWGRWREILSHGRFKRQLNEHDVEIICRALLAYCLVHYRGDEKIKGFIWDLITPTEDGQTRELQNHLGLSAPVPRGRKGKKVKTQTSSFDIQKAEWLRKYNPEQLLQDEGYKKHIKHHCNKVLLRVRMLYYLKQEVIGNECQKVFDGVDASDIDVWVPEPDHSEVPAEWWDFDADKSLLIGVFKHGYEKYNTIRADPALCFLERVGKPDEKAVAAEQRANDYMDGDVEDPEYKPAPAIFKDDIEDDVSSPGDLVIADGDGQLMEGDKVYWPTQSALTTRLRRLITAYQRTNKNRQIQQIQPTFSVPTSVMQPIYEEATLNPKMAAKIERQQRWTRREEADFYRVVSTFGVVFDPDRGQFDWTKFRAMARLHKKTDDSLEKYLYAFMSMCRRVCRLPSKEELVDPNIFIQPITEERASRTLYRIELLRKVREQALRHPQLFERLKLCHPNPDLPVWWECGPHDRDLLIGAAKHGVSRTDYHILRDPELSFMAAQRNYSQSKMAHSRTSTPLLQQYQVALSASPLTSLPRLLDAKGIILEEMKVKSENLKEEPQSSEEESMSSVETRTLIKSEPVSPKNGVLPQATGDQKSGGKCETDRRMVAARTEPLTPNPASKKPRVHKRGSESSSDSDSDSERSSCSSRSSSSSSSSSCSHSRSGSSSSSSSSCSSASSSSSSSTSSSSSSSSSSSEESDSDEEEAQKRESTTHMKAYDEESVASLSTTQDETQDSFQMNNGTPESAYILQGGYMLAASYWPKDRVMINRLDSICQTVLKGKWPSARRSYDANTVASFYTTKLLDSPGAATEYSDPSVPTPPGAGVKEEHDQSTQMSKVKKHVREKEFTVKIKDEGGLKLTFQKQGLAQKRPFDGEDGALGQQQYLTRLRELQSASETSLVNFPKSIPVSGTSIQPTLGANGVILDNQPIVKKRRGRRKNVEGVDIFFFNRNKPPNHVSLGLTSSQISTGINPALSYTQPQGIPDTESPVPVINLKDGTRLAGDDAPKRKDLEKWLKEHPGYVEDLGAFIPRMQLHEGRPKQKRHRCRNPNKLDVNSLTGEERVQLINRRNARKVGGAFAPPLKDLCRFLKENSEYGVAPEWGDVVKQSGFLPESMYERILTGPVVREEVSRRGRRPKSGIAKATAAAAAASATSVSGNPLLANGLLPGVDLTTLQALQQNLQNLQSLQVTAGLMGMPTGLPSGGEAKNMAAMFPMLLSGMAGLPNLLGMGGLLTKPTESGTEDKKGSDSKESEGKTERTESQSSENGGENSVSSSPSTSSTAALNTAAAANPLALNPLLLSNILYPGMLLTPGLNLHIPTLSQSNTFDVQNKNSDLGSSKSVEVKEEDSRIKDQEDKGGTEPSPLNENSTDEGSEKADASSGSDSTSSSSEDSDSSNED</sequence>
<gene>
    <name type="primary">CHD9</name>
    <name type="synonym">KIAA0308</name>
    <name type="synonym">KISH2</name>
    <name type="synonym">PRIC320</name>
    <name type="ORF">AD-013</name>
    <name type="ORF">x0008</name>
</gene>
<evidence type="ECO:0000250" key="1"/>
<evidence type="ECO:0000255" key="2">
    <source>
        <dbReference type="PROSITE-ProRule" id="PRU00053"/>
    </source>
</evidence>
<evidence type="ECO:0000255" key="3">
    <source>
        <dbReference type="PROSITE-ProRule" id="PRU00541"/>
    </source>
</evidence>
<evidence type="ECO:0000255" key="4">
    <source>
        <dbReference type="PROSITE-ProRule" id="PRU00542"/>
    </source>
</evidence>
<evidence type="ECO:0000256" key="5">
    <source>
        <dbReference type="SAM" id="MobiDB-lite"/>
    </source>
</evidence>
<evidence type="ECO:0000269" key="6">
    <source>
    </source>
</evidence>
<evidence type="ECO:0000269" key="7">
    <source>
    </source>
</evidence>
<evidence type="ECO:0000269" key="8">
    <source>
    </source>
</evidence>
<evidence type="ECO:0000303" key="9">
    <source>
    </source>
</evidence>
<evidence type="ECO:0000303" key="10">
    <source>
    </source>
</evidence>
<evidence type="ECO:0000303" key="11">
    <source>
    </source>
</evidence>
<evidence type="ECO:0000303" key="12">
    <source ref="3"/>
</evidence>
<evidence type="ECO:0000305" key="13"/>
<evidence type="ECO:0007744" key="14">
    <source>
    </source>
</evidence>
<evidence type="ECO:0007744" key="15">
    <source>
    </source>
</evidence>
<evidence type="ECO:0007744" key="16">
    <source>
    </source>
</evidence>
<evidence type="ECO:0007744" key="17">
    <source>
    </source>
</evidence>
<evidence type="ECO:0007744" key="18">
    <source>
    </source>
</evidence>
<evidence type="ECO:0007744" key="19">
    <source>
    </source>
</evidence>
<evidence type="ECO:0007744" key="20">
    <source>
    </source>
</evidence>
<evidence type="ECO:0007744" key="21">
    <source>
    </source>
</evidence>
<evidence type="ECO:0007744" key="22">
    <source>
    </source>
</evidence>